<sequence>MREYPNGEKTHLTVMAAGFPSLTGDHKVIYVAADRHVTSEEILEAAIRLLS</sequence>
<gene>
    <name type="primary">ynfN</name>
    <name type="ordered locus">b1551</name>
    <name type="ordered locus">JW5254</name>
</gene>
<feature type="chain" id="PRO_0000168968" description="Uncharacterized protein YnfN">
    <location>
        <begin position="1"/>
        <end position="51"/>
    </location>
</feature>
<proteinExistence type="evidence at transcript level"/>
<protein>
    <recommendedName>
        <fullName>Uncharacterized protein YnfN</fullName>
    </recommendedName>
</protein>
<accession>P76157</accession>
<accession>Q2MB89</accession>
<dbReference type="EMBL" id="U00096">
    <property type="protein sequence ID" value="AAC74624.2"/>
    <property type="molecule type" value="Genomic_DNA"/>
</dbReference>
<dbReference type="EMBL" id="AP009048">
    <property type="protein sequence ID" value="BAE76467.1"/>
    <property type="molecule type" value="Genomic_DNA"/>
</dbReference>
<dbReference type="PIR" id="B64910">
    <property type="entry name" value="B64910"/>
</dbReference>
<dbReference type="RefSeq" id="NP_416069.2">
    <property type="nucleotide sequence ID" value="NC_000913.3"/>
</dbReference>
<dbReference type="RefSeq" id="WP_001309517.1">
    <property type="nucleotide sequence ID" value="NZ_JACEFS010000059.1"/>
</dbReference>
<dbReference type="SMR" id="P76157"/>
<dbReference type="BioGRID" id="4260239">
    <property type="interactions" value="7"/>
</dbReference>
<dbReference type="FunCoup" id="P76157">
    <property type="interactions" value="15"/>
</dbReference>
<dbReference type="STRING" id="511145.b1551"/>
<dbReference type="PaxDb" id="511145-b1551"/>
<dbReference type="EnsemblBacteria" id="AAC74624">
    <property type="protein sequence ID" value="AAC74624"/>
    <property type="gene ID" value="b1551"/>
</dbReference>
<dbReference type="GeneID" id="946097"/>
<dbReference type="KEGG" id="ecj:JW5254"/>
<dbReference type="KEGG" id="eco:b1551"/>
<dbReference type="PATRIC" id="fig|83333.113.peg.1591"/>
<dbReference type="EchoBASE" id="EB4131"/>
<dbReference type="eggNOG" id="ENOG5032VWI">
    <property type="taxonomic scope" value="Bacteria"/>
</dbReference>
<dbReference type="HOGENOM" id="CLU_198909_0_0_6"/>
<dbReference type="InParanoid" id="P76157"/>
<dbReference type="OMA" id="NAEPCKV"/>
<dbReference type="OrthoDB" id="6576015at2"/>
<dbReference type="BioCyc" id="EcoCyc:G6824-MONOMER"/>
<dbReference type="PRO" id="PR:P76157"/>
<dbReference type="Proteomes" id="UP000000625">
    <property type="component" value="Chromosome"/>
</dbReference>
<keyword id="KW-1185">Reference proteome</keyword>
<comment type="induction">
    <text evidence="1">Transiently induced by cold shock.</text>
</comment>
<reference key="1">
    <citation type="journal article" date="1997" name="Science">
        <title>The complete genome sequence of Escherichia coli K-12.</title>
        <authorList>
            <person name="Blattner F.R."/>
            <person name="Plunkett G. III"/>
            <person name="Bloch C.A."/>
            <person name="Perna N.T."/>
            <person name="Burland V."/>
            <person name="Riley M."/>
            <person name="Collado-Vides J."/>
            <person name="Glasner J.D."/>
            <person name="Rode C.K."/>
            <person name="Mayhew G.F."/>
            <person name="Gregor J."/>
            <person name="Davis N.W."/>
            <person name="Kirkpatrick H.A."/>
            <person name="Goeden M.A."/>
            <person name="Rose D.J."/>
            <person name="Mau B."/>
            <person name="Shao Y."/>
        </authorList>
    </citation>
    <scope>NUCLEOTIDE SEQUENCE [LARGE SCALE GENOMIC DNA]</scope>
    <source>
        <strain>K12 / MG1655 / ATCC 47076</strain>
    </source>
</reference>
<reference key="2">
    <citation type="journal article" date="2006" name="Mol. Syst. Biol.">
        <title>Highly accurate genome sequences of Escherichia coli K-12 strains MG1655 and W3110.</title>
        <authorList>
            <person name="Hayashi K."/>
            <person name="Morooka N."/>
            <person name="Yamamoto Y."/>
            <person name="Fujita K."/>
            <person name="Isono K."/>
            <person name="Choi S."/>
            <person name="Ohtsubo E."/>
            <person name="Baba T."/>
            <person name="Wanner B.L."/>
            <person name="Mori H."/>
            <person name="Horiuchi T."/>
        </authorList>
    </citation>
    <scope>NUCLEOTIDE SEQUENCE [LARGE SCALE GENOMIC DNA]</scope>
    <source>
        <strain>K12 / W3110 / ATCC 27325 / DSM 5911</strain>
    </source>
</reference>
<reference key="3">
    <citation type="journal article" date="2003" name="Res. Microbiol.">
        <title>Changes in Escherichia coli transcriptome during acclimatization at low temperature.</title>
        <authorList>
            <person name="Polissi A."/>
            <person name="De Laurentis W."/>
            <person name="Zangrossi S."/>
            <person name="Briani F."/>
            <person name="Longhi V."/>
            <person name="Pesole G."/>
            <person name="Deho G."/>
        </authorList>
    </citation>
    <scope>INDUCTION BY COLD SHOCK</scope>
    <source>
        <strain>K12 / MG1655 / ATCC 47076</strain>
    </source>
</reference>
<name>YNFN_ECOLI</name>
<organism>
    <name type="scientific">Escherichia coli (strain K12)</name>
    <dbReference type="NCBI Taxonomy" id="83333"/>
    <lineage>
        <taxon>Bacteria</taxon>
        <taxon>Pseudomonadati</taxon>
        <taxon>Pseudomonadota</taxon>
        <taxon>Gammaproteobacteria</taxon>
        <taxon>Enterobacterales</taxon>
        <taxon>Enterobacteriaceae</taxon>
        <taxon>Escherichia</taxon>
    </lineage>
</organism>
<evidence type="ECO:0000269" key="1">
    <source>
    </source>
</evidence>